<feature type="chain" id="PRO_0000258429" description="Phosphoribosylformylglycinamidine cyclo-ligase">
    <location>
        <begin position="1"/>
        <end position="341"/>
    </location>
</feature>
<reference key="1">
    <citation type="journal article" date="2005" name="Genome Res.">
        <title>Comparative and functional genomic analyses of the pathogenicity of phytopathogen Xanthomonas campestris pv. campestris.</title>
        <authorList>
            <person name="Qian W."/>
            <person name="Jia Y."/>
            <person name="Ren S.-X."/>
            <person name="He Y.-Q."/>
            <person name="Feng J.-X."/>
            <person name="Lu L.-F."/>
            <person name="Sun Q."/>
            <person name="Ying G."/>
            <person name="Tang D.-J."/>
            <person name="Tang H."/>
            <person name="Wu W."/>
            <person name="Hao P."/>
            <person name="Wang L."/>
            <person name="Jiang B.-L."/>
            <person name="Zeng S."/>
            <person name="Gu W.-Y."/>
            <person name="Lu G."/>
            <person name="Rong L."/>
            <person name="Tian Y."/>
            <person name="Yao Z."/>
            <person name="Fu G."/>
            <person name="Chen B."/>
            <person name="Fang R."/>
            <person name="Qiang B."/>
            <person name="Chen Z."/>
            <person name="Zhao G.-P."/>
            <person name="Tang J.-L."/>
            <person name="He C."/>
        </authorList>
    </citation>
    <scope>NUCLEOTIDE SEQUENCE [LARGE SCALE GENOMIC DNA]</scope>
    <source>
        <strain>8004</strain>
    </source>
</reference>
<evidence type="ECO:0000255" key="1">
    <source>
        <dbReference type="HAMAP-Rule" id="MF_00741"/>
    </source>
</evidence>
<sequence length="341" mass="35778">MTYRDAGVDIDAGNALVERIKPLVKRSFRPEVMGGLGGFGALFDLSGKYKEPVLVSGTDGVGTKLKLAQQLGRHDTIGIDLVGMCVNDVLVQGAEPLFFLDYFATGKLDIDTAAAVVGGIARGCELSGCALIGGETAEMPDMYPPGEYDLAGFTVGAVEKSQLLDGAQVREGDVLIGIASSGPHSNGYSLIRKIYERAGSPADLVLDDGVALIDALMAPTALYVKPILALLKSHGEAIHAMAHVTGGGLTENIIRVIPDGLGLDIDATAWILPPVFAWLQREGAVADAEMWRTFNCGIGFVLVAAPAQAAALEQALDAQSLAHWRIGQVVTAQGDERVRIG</sequence>
<accession>Q4UX30</accession>
<organism>
    <name type="scientific">Xanthomonas campestris pv. campestris (strain 8004)</name>
    <dbReference type="NCBI Taxonomy" id="314565"/>
    <lineage>
        <taxon>Bacteria</taxon>
        <taxon>Pseudomonadati</taxon>
        <taxon>Pseudomonadota</taxon>
        <taxon>Gammaproteobacteria</taxon>
        <taxon>Lysobacterales</taxon>
        <taxon>Lysobacteraceae</taxon>
        <taxon>Xanthomonas</taxon>
    </lineage>
</organism>
<dbReference type="EC" id="6.3.3.1" evidence="1"/>
<dbReference type="EMBL" id="CP000050">
    <property type="protein sequence ID" value="AAY48393.1"/>
    <property type="molecule type" value="Genomic_DNA"/>
</dbReference>
<dbReference type="RefSeq" id="WP_029628894.1">
    <property type="nucleotide sequence ID" value="NZ_CP155948.1"/>
</dbReference>
<dbReference type="SMR" id="Q4UX30"/>
<dbReference type="KEGG" id="xcb:XC_1324"/>
<dbReference type="HOGENOM" id="CLU_047116_0_0_6"/>
<dbReference type="UniPathway" id="UPA00074">
    <property type="reaction ID" value="UER00129"/>
</dbReference>
<dbReference type="Proteomes" id="UP000000420">
    <property type="component" value="Chromosome"/>
</dbReference>
<dbReference type="GO" id="GO:0005829">
    <property type="term" value="C:cytosol"/>
    <property type="evidence" value="ECO:0007669"/>
    <property type="project" value="TreeGrafter"/>
</dbReference>
<dbReference type="GO" id="GO:0005524">
    <property type="term" value="F:ATP binding"/>
    <property type="evidence" value="ECO:0007669"/>
    <property type="project" value="UniProtKB-KW"/>
</dbReference>
<dbReference type="GO" id="GO:0004637">
    <property type="term" value="F:phosphoribosylamine-glycine ligase activity"/>
    <property type="evidence" value="ECO:0007669"/>
    <property type="project" value="TreeGrafter"/>
</dbReference>
<dbReference type="GO" id="GO:0004641">
    <property type="term" value="F:phosphoribosylformylglycinamidine cyclo-ligase activity"/>
    <property type="evidence" value="ECO:0007669"/>
    <property type="project" value="UniProtKB-UniRule"/>
</dbReference>
<dbReference type="GO" id="GO:0006189">
    <property type="term" value="P:'de novo' IMP biosynthetic process"/>
    <property type="evidence" value="ECO:0007669"/>
    <property type="project" value="UniProtKB-UniRule"/>
</dbReference>
<dbReference type="GO" id="GO:0046084">
    <property type="term" value="P:adenine biosynthetic process"/>
    <property type="evidence" value="ECO:0007669"/>
    <property type="project" value="TreeGrafter"/>
</dbReference>
<dbReference type="CDD" id="cd02196">
    <property type="entry name" value="PurM"/>
    <property type="match status" value="1"/>
</dbReference>
<dbReference type="FunFam" id="3.30.1330.10:FF:000001">
    <property type="entry name" value="Phosphoribosylformylglycinamidine cyclo-ligase"/>
    <property type="match status" value="1"/>
</dbReference>
<dbReference type="FunFam" id="3.90.650.10:FF:000001">
    <property type="entry name" value="Phosphoribosylformylglycinamidine cyclo-ligase"/>
    <property type="match status" value="1"/>
</dbReference>
<dbReference type="Gene3D" id="3.90.650.10">
    <property type="entry name" value="PurM-like C-terminal domain"/>
    <property type="match status" value="1"/>
</dbReference>
<dbReference type="Gene3D" id="3.30.1330.10">
    <property type="entry name" value="PurM-like, N-terminal domain"/>
    <property type="match status" value="1"/>
</dbReference>
<dbReference type="HAMAP" id="MF_00741">
    <property type="entry name" value="AIRS"/>
    <property type="match status" value="1"/>
</dbReference>
<dbReference type="InterPro" id="IPR010918">
    <property type="entry name" value="PurM-like_C_dom"/>
</dbReference>
<dbReference type="InterPro" id="IPR036676">
    <property type="entry name" value="PurM-like_C_sf"/>
</dbReference>
<dbReference type="InterPro" id="IPR016188">
    <property type="entry name" value="PurM-like_N"/>
</dbReference>
<dbReference type="InterPro" id="IPR036921">
    <property type="entry name" value="PurM-like_N_sf"/>
</dbReference>
<dbReference type="InterPro" id="IPR004733">
    <property type="entry name" value="PurM_cligase"/>
</dbReference>
<dbReference type="NCBIfam" id="TIGR00878">
    <property type="entry name" value="purM"/>
    <property type="match status" value="1"/>
</dbReference>
<dbReference type="PANTHER" id="PTHR10520:SF12">
    <property type="entry name" value="TRIFUNCTIONAL PURINE BIOSYNTHETIC PROTEIN ADENOSINE-3"/>
    <property type="match status" value="1"/>
</dbReference>
<dbReference type="PANTHER" id="PTHR10520">
    <property type="entry name" value="TRIFUNCTIONAL PURINE BIOSYNTHETIC PROTEIN ADENOSINE-3-RELATED"/>
    <property type="match status" value="1"/>
</dbReference>
<dbReference type="Pfam" id="PF00586">
    <property type="entry name" value="AIRS"/>
    <property type="match status" value="1"/>
</dbReference>
<dbReference type="Pfam" id="PF02769">
    <property type="entry name" value="AIRS_C"/>
    <property type="match status" value="1"/>
</dbReference>
<dbReference type="SUPFAM" id="SSF56042">
    <property type="entry name" value="PurM C-terminal domain-like"/>
    <property type="match status" value="1"/>
</dbReference>
<dbReference type="SUPFAM" id="SSF55326">
    <property type="entry name" value="PurM N-terminal domain-like"/>
    <property type="match status" value="1"/>
</dbReference>
<proteinExistence type="inferred from homology"/>
<gene>
    <name evidence="1" type="primary">purM</name>
    <name type="ordered locus">XC_1324</name>
</gene>
<protein>
    <recommendedName>
        <fullName evidence="1">Phosphoribosylformylglycinamidine cyclo-ligase</fullName>
        <ecNumber evidence="1">6.3.3.1</ecNumber>
    </recommendedName>
    <alternativeName>
        <fullName evidence="1">AIR synthase</fullName>
    </alternativeName>
    <alternativeName>
        <fullName evidence="1">AIRS</fullName>
    </alternativeName>
    <alternativeName>
        <fullName evidence="1">Phosphoribosyl-aminoimidazole synthetase</fullName>
    </alternativeName>
</protein>
<keyword id="KW-0067">ATP-binding</keyword>
<keyword id="KW-0963">Cytoplasm</keyword>
<keyword id="KW-0436">Ligase</keyword>
<keyword id="KW-0547">Nucleotide-binding</keyword>
<keyword id="KW-0658">Purine biosynthesis</keyword>
<comment type="catalytic activity">
    <reaction evidence="1">
        <text>2-formamido-N(1)-(5-O-phospho-beta-D-ribosyl)acetamidine + ATP = 5-amino-1-(5-phospho-beta-D-ribosyl)imidazole + ADP + phosphate + H(+)</text>
        <dbReference type="Rhea" id="RHEA:23032"/>
        <dbReference type="ChEBI" id="CHEBI:15378"/>
        <dbReference type="ChEBI" id="CHEBI:30616"/>
        <dbReference type="ChEBI" id="CHEBI:43474"/>
        <dbReference type="ChEBI" id="CHEBI:137981"/>
        <dbReference type="ChEBI" id="CHEBI:147287"/>
        <dbReference type="ChEBI" id="CHEBI:456216"/>
        <dbReference type="EC" id="6.3.3.1"/>
    </reaction>
</comment>
<comment type="pathway">
    <text evidence="1">Purine metabolism; IMP biosynthesis via de novo pathway; 5-amino-1-(5-phospho-D-ribosyl)imidazole from N(2)-formyl-N(1)-(5-phospho-D-ribosyl)glycinamide: step 2/2.</text>
</comment>
<comment type="subcellular location">
    <subcellularLocation>
        <location evidence="1">Cytoplasm</location>
    </subcellularLocation>
</comment>
<comment type="similarity">
    <text evidence="1">Belongs to the AIR synthase family.</text>
</comment>
<name>PUR5_XANC8</name>